<keyword id="KW-1185">Reference proteome</keyword>
<feature type="chain" id="PRO_0000251728" description="Uncharacterized protein C1orf105 homolog">
    <location>
        <begin position="1"/>
        <end position="199"/>
    </location>
</feature>
<organism>
    <name type="scientific">Rattus norvegicus</name>
    <name type="common">Rat</name>
    <dbReference type="NCBI Taxonomy" id="10116"/>
    <lineage>
        <taxon>Eukaryota</taxon>
        <taxon>Metazoa</taxon>
        <taxon>Chordata</taxon>
        <taxon>Craniata</taxon>
        <taxon>Vertebrata</taxon>
        <taxon>Euteleostomi</taxon>
        <taxon>Mammalia</taxon>
        <taxon>Eutheria</taxon>
        <taxon>Euarchontoglires</taxon>
        <taxon>Glires</taxon>
        <taxon>Rodentia</taxon>
        <taxon>Myomorpha</taxon>
        <taxon>Muroidea</taxon>
        <taxon>Muridae</taxon>
        <taxon>Murinae</taxon>
        <taxon>Rattus</taxon>
    </lineage>
</organism>
<name>CA105_RAT</name>
<proteinExistence type="evidence at transcript level"/>
<sequence>MEKRELKTFVPKFDKIPWLSEASVVNKPLILSIPRRYRSSIVLTSYKKDMYLPHLLEDSDFISKARKNEHENLLPRNKQLCSTCRGYQEMKTLQPKIFKIPDHREPSPQNSVNHGEVSLHSQEQQLHACNDIPTESIRYRLPILGPRTAVFHRLLSDAYKTPQDTQYCAFPKKKGMSKTVKQITTPHAALYPCRSYSAI</sequence>
<dbReference type="EMBL" id="BC083573">
    <property type="protein sequence ID" value="AAH83573.1"/>
    <property type="molecule type" value="mRNA"/>
</dbReference>
<dbReference type="RefSeq" id="NP_001014152.1">
    <property type="nucleotide sequence ID" value="NM_001014130.1"/>
</dbReference>
<dbReference type="FunCoup" id="Q5XIU7">
    <property type="interactions" value="2"/>
</dbReference>
<dbReference type="STRING" id="10116.ENSRNOP00000036314"/>
<dbReference type="PhosphoSitePlus" id="Q5XIU7"/>
<dbReference type="PaxDb" id="10116-ENSRNOP00000036314"/>
<dbReference type="Ensembl" id="ENSRNOT00000035815.7">
    <property type="protein sequence ID" value="ENSRNOP00000036314.4"/>
    <property type="gene ID" value="ENSRNOG00000026523.7"/>
</dbReference>
<dbReference type="GeneID" id="360864"/>
<dbReference type="KEGG" id="rno:360864"/>
<dbReference type="UCSC" id="RGD:1309106">
    <property type="organism name" value="rat"/>
</dbReference>
<dbReference type="AGR" id="RGD:1309106"/>
<dbReference type="CTD" id="360864"/>
<dbReference type="RGD" id="1309106">
    <property type="gene designation" value="C13h1orf105"/>
</dbReference>
<dbReference type="eggNOG" id="ENOG502TDU3">
    <property type="taxonomic scope" value="Eukaryota"/>
</dbReference>
<dbReference type="GeneTree" id="ENSGT00390000015231"/>
<dbReference type="HOGENOM" id="CLU_1474736_0_0_1"/>
<dbReference type="InParanoid" id="Q5XIU7"/>
<dbReference type="OrthoDB" id="60889at9989"/>
<dbReference type="PhylomeDB" id="Q5XIU7"/>
<dbReference type="TreeFam" id="TF336911"/>
<dbReference type="PRO" id="PR:Q5XIU7"/>
<dbReference type="Proteomes" id="UP000002494">
    <property type="component" value="Chromosome 13"/>
</dbReference>
<dbReference type="Bgee" id="ENSRNOG00000026523">
    <property type="expression patterns" value="Expressed in testis and 4 other cell types or tissues"/>
</dbReference>
<dbReference type="ExpressionAtlas" id="Q5XIU7">
    <property type="expression patterns" value="baseline"/>
</dbReference>
<dbReference type="InterPro" id="IPR027845">
    <property type="entry name" value="DUF4548"/>
</dbReference>
<dbReference type="PANTHER" id="PTHR39410">
    <property type="entry name" value="RIKEN CDNA 4930558K02 GENE"/>
    <property type="match status" value="1"/>
</dbReference>
<dbReference type="PANTHER" id="PTHR39410:SF1">
    <property type="entry name" value="RIKEN CDNA 4930558K02 GENE"/>
    <property type="match status" value="1"/>
</dbReference>
<dbReference type="Pfam" id="PF15081">
    <property type="entry name" value="DUF4548"/>
    <property type="match status" value="1"/>
</dbReference>
<reference key="1">
    <citation type="journal article" date="2004" name="Genome Res.">
        <title>The status, quality, and expansion of the NIH full-length cDNA project: the Mammalian Gene Collection (MGC).</title>
        <authorList>
            <consortium name="The MGC Project Team"/>
        </authorList>
    </citation>
    <scope>NUCLEOTIDE SEQUENCE [LARGE SCALE MRNA]</scope>
    <source>
        <tissue>Testis</tissue>
    </source>
</reference>
<protein>
    <recommendedName>
        <fullName>Uncharacterized protein C1orf105 homolog</fullName>
    </recommendedName>
</protein>
<accession>Q5XIU7</accession>